<gene>
    <name evidence="1" type="primary">thrB</name>
    <name type="ordered locus">SeAg_B0003</name>
</gene>
<proteinExistence type="inferred from homology"/>
<keyword id="KW-0028">Amino-acid biosynthesis</keyword>
<keyword id="KW-0067">ATP-binding</keyword>
<keyword id="KW-0963">Cytoplasm</keyword>
<keyword id="KW-0418">Kinase</keyword>
<keyword id="KW-0547">Nucleotide-binding</keyword>
<keyword id="KW-0791">Threonine biosynthesis</keyword>
<keyword id="KW-0808">Transferase</keyword>
<comment type="function">
    <text evidence="1">Catalyzes the ATP-dependent phosphorylation of L-homoserine to L-homoserine phosphate.</text>
</comment>
<comment type="catalytic activity">
    <reaction evidence="1">
        <text>L-homoserine + ATP = O-phospho-L-homoserine + ADP + H(+)</text>
        <dbReference type="Rhea" id="RHEA:13985"/>
        <dbReference type="ChEBI" id="CHEBI:15378"/>
        <dbReference type="ChEBI" id="CHEBI:30616"/>
        <dbReference type="ChEBI" id="CHEBI:57476"/>
        <dbReference type="ChEBI" id="CHEBI:57590"/>
        <dbReference type="ChEBI" id="CHEBI:456216"/>
        <dbReference type="EC" id="2.7.1.39"/>
    </reaction>
</comment>
<comment type="pathway">
    <text evidence="1">Amino-acid biosynthesis; L-threonine biosynthesis; L-threonine from L-aspartate: step 4/5.</text>
</comment>
<comment type="subcellular location">
    <subcellularLocation>
        <location evidence="1">Cytoplasm</location>
    </subcellularLocation>
</comment>
<comment type="similarity">
    <text evidence="1">Belongs to the GHMP kinase family. Homoserine kinase subfamily.</text>
</comment>
<name>KHSE_SALA4</name>
<reference key="1">
    <citation type="journal article" date="2011" name="J. Bacteriol.">
        <title>Comparative genomics of 28 Salmonella enterica isolates: evidence for CRISPR-mediated adaptive sublineage evolution.</title>
        <authorList>
            <person name="Fricke W.F."/>
            <person name="Mammel M.K."/>
            <person name="McDermott P.F."/>
            <person name="Tartera C."/>
            <person name="White D.G."/>
            <person name="Leclerc J.E."/>
            <person name="Ravel J."/>
            <person name="Cebula T.A."/>
        </authorList>
    </citation>
    <scope>NUCLEOTIDE SEQUENCE [LARGE SCALE GENOMIC DNA]</scope>
    <source>
        <strain>SL483</strain>
    </source>
</reference>
<feature type="chain" id="PRO_1000122436" description="Homoserine kinase">
    <location>
        <begin position="1"/>
        <end position="309"/>
    </location>
</feature>
<feature type="binding site" evidence="1">
    <location>
        <begin position="91"/>
        <end position="101"/>
    </location>
    <ligand>
        <name>ATP</name>
        <dbReference type="ChEBI" id="CHEBI:30616"/>
    </ligand>
</feature>
<organism>
    <name type="scientific">Salmonella agona (strain SL483)</name>
    <dbReference type="NCBI Taxonomy" id="454166"/>
    <lineage>
        <taxon>Bacteria</taxon>
        <taxon>Pseudomonadati</taxon>
        <taxon>Pseudomonadota</taxon>
        <taxon>Gammaproteobacteria</taxon>
        <taxon>Enterobacterales</taxon>
        <taxon>Enterobacteriaceae</taxon>
        <taxon>Salmonella</taxon>
    </lineage>
</organism>
<dbReference type="EC" id="2.7.1.39" evidence="1"/>
<dbReference type="EMBL" id="CP001138">
    <property type="protein sequence ID" value="ACH51034.1"/>
    <property type="molecule type" value="Genomic_DNA"/>
</dbReference>
<dbReference type="RefSeq" id="WP_000241685.1">
    <property type="nucleotide sequence ID" value="NC_011149.1"/>
</dbReference>
<dbReference type="SMR" id="B5F6C2"/>
<dbReference type="KEGG" id="sea:SeAg_B0003"/>
<dbReference type="HOGENOM" id="CLU_041243_1_1_6"/>
<dbReference type="UniPathway" id="UPA00050">
    <property type="reaction ID" value="UER00064"/>
</dbReference>
<dbReference type="Proteomes" id="UP000008819">
    <property type="component" value="Chromosome"/>
</dbReference>
<dbReference type="GO" id="GO:0005737">
    <property type="term" value="C:cytoplasm"/>
    <property type="evidence" value="ECO:0007669"/>
    <property type="project" value="UniProtKB-SubCell"/>
</dbReference>
<dbReference type="GO" id="GO:0005524">
    <property type="term" value="F:ATP binding"/>
    <property type="evidence" value="ECO:0007669"/>
    <property type="project" value="UniProtKB-UniRule"/>
</dbReference>
<dbReference type="GO" id="GO:0004413">
    <property type="term" value="F:homoserine kinase activity"/>
    <property type="evidence" value="ECO:0007669"/>
    <property type="project" value="UniProtKB-UniRule"/>
</dbReference>
<dbReference type="GO" id="GO:0009088">
    <property type="term" value="P:threonine biosynthetic process"/>
    <property type="evidence" value="ECO:0007669"/>
    <property type="project" value="UniProtKB-UniRule"/>
</dbReference>
<dbReference type="FunFam" id="3.30.230.10:FF:000020">
    <property type="entry name" value="Homoserine kinase"/>
    <property type="match status" value="1"/>
</dbReference>
<dbReference type="FunFam" id="3.30.70.890:FF:000002">
    <property type="entry name" value="Homoserine kinase"/>
    <property type="match status" value="1"/>
</dbReference>
<dbReference type="Gene3D" id="3.30.230.10">
    <property type="match status" value="1"/>
</dbReference>
<dbReference type="Gene3D" id="3.30.70.890">
    <property type="entry name" value="GHMP kinase, C-terminal domain"/>
    <property type="match status" value="1"/>
</dbReference>
<dbReference type="HAMAP" id="MF_00384">
    <property type="entry name" value="Homoser_kinase"/>
    <property type="match status" value="1"/>
</dbReference>
<dbReference type="InterPro" id="IPR013750">
    <property type="entry name" value="GHMP_kinase_C_dom"/>
</dbReference>
<dbReference type="InterPro" id="IPR036554">
    <property type="entry name" value="GHMP_kinase_C_sf"/>
</dbReference>
<dbReference type="InterPro" id="IPR006204">
    <property type="entry name" value="GHMP_kinase_N_dom"/>
</dbReference>
<dbReference type="InterPro" id="IPR006203">
    <property type="entry name" value="GHMP_knse_ATP-bd_CS"/>
</dbReference>
<dbReference type="InterPro" id="IPR000870">
    <property type="entry name" value="Homoserine_kinase"/>
</dbReference>
<dbReference type="InterPro" id="IPR020568">
    <property type="entry name" value="Ribosomal_Su5_D2-typ_SF"/>
</dbReference>
<dbReference type="InterPro" id="IPR014721">
    <property type="entry name" value="Ribsml_uS5_D2-typ_fold_subgr"/>
</dbReference>
<dbReference type="NCBIfam" id="NF002288">
    <property type="entry name" value="PRK01212.1-4"/>
    <property type="match status" value="1"/>
</dbReference>
<dbReference type="NCBIfam" id="TIGR00191">
    <property type="entry name" value="thrB"/>
    <property type="match status" value="1"/>
</dbReference>
<dbReference type="PANTHER" id="PTHR20861:SF1">
    <property type="entry name" value="HOMOSERINE KINASE"/>
    <property type="match status" value="1"/>
</dbReference>
<dbReference type="PANTHER" id="PTHR20861">
    <property type="entry name" value="HOMOSERINE/4-DIPHOSPHOCYTIDYL-2-C-METHYL-D-ERYTHRITOL KINASE"/>
    <property type="match status" value="1"/>
</dbReference>
<dbReference type="Pfam" id="PF08544">
    <property type="entry name" value="GHMP_kinases_C"/>
    <property type="match status" value="1"/>
</dbReference>
<dbReference type="Pfam" id="PF00288">
    <property type="entry name" value="GHMP_kinases_N"/>
    <property type="match status" value="1"/>
</dbReference>
<dbReference type="PIRSF" id="PIRSF000676">
    <property type="entry name" value="Homoser_kin"/>
    <property type="match status" value="1"/>
</dbReference>
<dbReference type="PRINTS" id="PR00958">
    <property type="entry name" value="HOMSERKINASE"/>
</dbReference>
<dbReference type="SUPFAM" id="SSF55060">
    <property type="entry name" value="GHMP Kinase, C-terminal domain"/>
    <property type="match status" value="1"/>
</dbReference>
<dbReference type="SUPFAM" id="SSF54211">
    <property type="entry name" value="Ribosomal protein S5 domain 2-like"/>
    <property type="match status" value="1"/>
</dbReference>
<dbReference type="PROSITE" id="PS00627">
    <property type="entry name" value="GHMP_KINASES_ATP"/>
    <property type="match status" value="1"/>
</dbReference>
<protein>
    <recommendedName>
        <fullName evidence="1">Homoserine kinase</fullName>
        <shortName evidence="1">HK</shortName>
        <shortName evidence="1">HSK</shortName>
        <ecNumber evidence="1">2.7.1.39</ecNumber>
    </recommendedName>
</protein>
<sequence length="309" mass="33286">MVKVYAPASSANMSVGFDVLGAAVTPVDGTLLGDVVSVEAADHFRLHNLGRFADKLPPEPRENIVYQCWERFCQALGKTIPVAMTLEKNMPIGSGLGSSACSVVAALVAMNEHCGKPLNDTRLLALMGELEGRISGSIHYDNVAPCFLGGMQLMIEENGIISQQVPGFDEWLWVLAYPGIKVSTAEARAILPAQYRRQDCIAHGRHLAGFIHACYSRQPQLAAALMKDVIAEPYRARLLPGFSQARQAVSEIGALASGISGSGPTLFALCDKPETAQRVADWLSKHYLQNQEGFVHICRLDTAGARVVG</sequence>
<accession>B5F6C2</accession>
<evidence type="ECO:0000255" key="1">
    <source>
        <dbReference type="HAMAP-Rule" id="MF_00384"/>
    </source>
</evidence>